<keyword id="KW-0067">ATP-binding</keyword>
<keyword id="KW-0131">Cell cycle</keyword>
<keyword id="KW-0132">Cell division</keyword>
<keyword id="KW-0133">Cell shape</keyword>
<keyword id="KW-0961">Cell wall biogenesis/degradation</keyword>
<keyword id="KW-0963">Cytoplasm</keyword>
<keyword id="KW-0436">Ligase</keyword>
<keyword id="KW-0547">Nucleotide-binding</keyword>
<keyword id="KW-0573">Peptidoglycan synthesis</keyword>
<accession>C1EPS6</accession>
<dbReference type="EC" id="6.3.2.9" evidence="1"/>
<dbReference type="EMBL" id="CP001407">
    <property type="protein sequence ID" value="ACO29274.1"/>
    <property type="molecule type" value="Genomic_DNA"/>
</dbReference>
<dbReference type="RefSeq" id="WP_000860120.1">
    <property type="nucleotide sequence ID" value="NZ_CP009318.1"/>
</dbReference>
<dbReference type="SMR" id="C1EPS6"/>
<dbReference type="KEGG" id="bcx:BCA_4016"/>
<dbReference type="PATRIC" id="fig|572264.18.peg.3969"/>
<dbReference type="UniPathway" id="UPA00219"/>
<dbReference type="Proteomes" id="UP000002210">
    <property type="component" value="Chromosome"/>
</dbReference>
<dbReference type="GO" id="GO:0005737">
    <property type="term" value="C:cytoplasm"/>
    <property type="evidence" value="ECO:0007669"/>
    <property type="project" value="UniProtKB-SubCell"/>
</dbReference>
<dbReference type="GO" id="GO:0005524">
    <property type="term" value="F:ATP binding"/>
    <property type="evidence" value="ECO:0007669"/>
    <property type="project" value="UniProtKB-UniRule"/>
</dbReference>
<dbReference type="GO" id="GO:0008764">
    <property type="term" value="F:UDP-N-acetylmuramoylalanine-D-glutamate ligase activity"/>
    <property type="evidence" value="ECO:0007669"/>
    <property type="project" value="UniProtKB-UniRule"/>
</dbReference>
<dbReference type="GO" id="GO:0051301">
    <property type="term" value="P:cell division"/>
    <property type="evidence" value="ECO:0007669"/>
    <property type="project" value="UniProtKB-KW"/>
</dbReference>
<dbReference type="GO" id="GO:0071555">
    <property type="term" value="P:cell wall organization"/>
    <property type="evidence" value="ECO:0007669"/>
    <property type="project" value="UniProtKB-KW"/>
</dbReference>
<dbReference type="GO" id="GO:0009252">
    <property type="term" value="P:peptidoglycan biosynthetic process"/>
    <property type="evidence" value="ECO:0007669"/>
    <property type="project" value="UniProtKB-UniRule"/>
</dbReference>
<dbReference type="GO" id="GO:0008360">
    <property type="term" value="P:regulation of cell shape"/>
    <property type="evidence" value="ECO:0007669"/>
    <property type="project" value="UniProtKB-KW"/>
</dbReference>
<dbReference type="Gene3D" id="3.90.190.20">
    <property type="entry name" value="Mur ligase, C-terminal domain"/>
    <property type="match status" value="1"/>
</dbReference>
<dbReference type="Gene3D" id="3.40.1190.10">
    <property type="entry name" value="Mur-like, catalytic domain"/>
    <property type="match status" value="1"/>
</dbReference>
<dbReference type="Gene3D" id="3.40.50.720">
    <property type="entry name" value="NAD(P)-binding Rossmann-like Domain"/>
    <property type="match status" value="1"/>
</dbReference>
<dbReference type="HAMAP" id="MF_00639">
    <property type="entry name" value="MurD"/>
    <property type="match status" value="1"/>
</dbReference>
<dbReference type="InterPro" id="IPR036565">
    <property type="entry name" value="Mur-like_cat_sf"/>
</dbReference>
<dbReference type="InterPro" id="IPR004101">
    <property type="entry name" value="Mur_ligase_C"/>
</dbReference>
<dbReference type="InterPro" id="IPR036615">
    <property type="entry name" value="Mur_ligase_C_dom_sf"/>
</dbReference>
<dbReference type="InterPro" id="IPR013221">
    <property type="entry name" value="Mur_ligase_cen"/>
</dbReference>
<dbReference type="InterPro" id="IPR005762">
    <property type="entry name" value="MurD"/>
</dbReference>
<dbReference type="NCBIfam" id="TIGR01087">
    <property type="entry name" value="murD"/>
    <property type="match status" value="1"/>
</dbReference>
<dbReference type="PANTHER" id="PTHR43692">
    <property type="entry name" value="UDP-N-ACETYLMURAMOYLALANINE--D-GLUTAMATE LIGASE"/>
    <property type="match status" value="1"/>
</dbReference>
<dbReference type="PANTHER" id="PTHR43692:SF1">
    <property type="entry name" value="UDP-N-ACETYLMURAMOYLALANINE--D-GLUTAMATE LIGASE"/>
    <property type="match status" value="1"/>
</dbReference>
<dbReference type="Pfam" id="PF02875">
    <property type="entry name" value="Mur_ligase_C"/>
    <property type="match status" value="1"/>
</dbReference>
<dbReference type="Pfam" id="PF08245">
    <property type="entry name" value="Mur_ligase_M"/>
    <property type="match status" value="1"/>
</dbReference>
<dbReference type="Pfam" id="PF21799">
    <property type="entry name" value="MurD-like_N"/>
    <property type="match status" value="1"/>
</dbReference>
<dbReference type="SUPFAM" id="SSF51984">
    <property type="entry name" value="MurCD N-terminal domain"/>
    <property type="match status" value="1"/>
</dbReference>
<dbReference type="SUPFAM" id="SSF53623">
    <property type="entry name" value="MurD-like peptide ligases, catalytic domain"/>
    <property type="match status" value="1"/>
</dbReference>
<dbReference type="SUPFAM" id="SSF53244">
    <property type="entry name" value="MurD-like peptide ligases, peptide-binding domain"/>
    <property type="match status" value="1"/>
</dbReference>
<name>MURD_BACC3</name>
<organism>
    <name type="scientific">Bacillus cereus (strain 03BB102)</name>
    <dbReference type="NCBI Taxonomy" id="572264"/>
    <lineage>
        <taxon>Bacteria</taxon>
        <taxon>Bacillati</taxon>
        <taxon>Bacillota</taxon>
        <taxon>Bacilli</taxon>
        <taxon>Bacillales</taxon>
        <taxon>Bacillaceae</taxon>
        <taxon>Bacillus</taxon>
        <taxon>Bacillus cereus group</taxon>
    </lineage>
</organism>
<evidence type="ECO:0000255" key="1">
    <source>
        <dbReference type="HAMAP-Rule" id="MF_00639"/>
    </source>
</evidence>
<proteinExistence type="inferred from homology"/>
<reference key="1">
    <citation type="submission" date="2009-02" db="EMBL/GenBank/DDBJ databases">
        <title>Genome sequence of Bacillus cereus 03BB102.</title>
        <authorList>
            <person name="Dodson R.J."/>
            <person name="Jackson P."/>
            <person name="Munk A.C."/>
            <person name="Brettin T."/>
            <person name="Bruce D."/>
            <person name="Detter C."/>
            <person name="Tapia R."/>
            <person name="Han C."/>
            <person name="Sutton G."/>
            <person name="Sims D."/>
        </authorList>
    </citation>
    <scope>NUCLEOTIDE SEQUENCE [LARGE SCALE GENOMIC DNA]</scope>
    <source>
        <strain>03BB102</strain>
    </source>
</reference>
<comment type="function">
    <text evidence="1">Cell wall formation. Catalyzes the addition of glutamate to the nucleotide precursor UDP-N-acetylmuramoyl-L-alanine (UMA).</text>
</comment>
<comment type="catalytic activity">
    <reaction evidence="1">
        <text>UDP-N-acetyl-alpha-D-muramoyl-L-alanine + D-glutamate + ATP = UDP-N-acetyl-alpha-D-muramoyl-L-alanyl-D-glutamate + ADP + phosphate + H(+)</text>
        <dbReference type="Rhea" id="RHEA:16429"/>
        <dbReference type="ChEBI" id="CHEBI:15378"/>
        <dbReference type="ChEBI" id="CHEBI:29986"/>
        <dbReference type="ChEBI" id="CHEBI:30616"/>
        <dbReference type="ChEBI" id="CHEBI:43474"/>
        <dbReference type="ChEBI" id="CHEBI:83898"/>
        <dbReference type="ChEBI" id="CHEBI:83900"/>
        <dbReference type="ChEBI" id="CHEBI:456216"/>
        <dbReference type="EC" id="6.3.2.9"/>
    </reaction>
</comment>
<comment type="pathway">
    <text evidence="1">Cell wall biogenesis; peptidoglycan biosynthesis.</text>
</comment>
<comment type="subcellular location">
    <subcellularLocation>
        <location evidence="1">Cytoplasm</location>
    </subcellularLocation>
</comment>
<comment type="similarity">
    <text evidence="1">Belongs to the MurCDEF family.</text>
</comment>
<sequence>MKTVTEFQNKNILVLGIAKSGYAAATLLQKLGANVIVNDGKPLAENVLAAELQAKGMDVVCGGHPLELLERNISLVVKNPGIPYSNPILVAAKEKQIPIVTEVELAYRISEAPFVGITGSNGKTTTTMLTFEMLKEGQKHPVIAGNIGTVACEVAQDAKENEVVVTELSSFQLMGVELFQPKIAAFLNLFEAHLDYHGTKKEYGLAKANIFKNQTENDYSVINADDADVMALSAYSKGQKVLFSTTKEIEDGACIKDNALYFKAEKVVEVDDIVLPGQHNLENILAAMSIAKLLGVSNEAITAVLKRFTGVKHRLEYVTTINNRKFYNDSKATNMLATEKALSAFTQPTVLLAGGLDRGNEFDDLIPYFKNVKAIVTFGQTAPKLVRAAEKAGLETIESVDTLDEAVVKAYAHSTDGDVILLSPACASWDQFKTFEERGDIFIQAVHKLI</sequence>
<gene>
    <name evidence="1" type="primary">murD</name>
    <name type="ordered locus">BCA_4016</name>
</gene>
<feature type="chain" id="PRO_1000147393" description="UDP-N-acetylmuramoylalanine--D-glutamate ligase">
    <location>
        <begin position="1"/>
        <end position="450"/>
    </location>
</feature>
<feature type="binding site" evidence="1">
    <location>
        <begin position="119"/>
        <end position="125"/>
    </location>
    <ligand>
        <name>ATP</name>
        <dbReference type="ChEBI" id="CHEBI:30616"/>
    </ligand>
</feature>
<protein>
    <recommendedName>
        <fullName evidence="1">UDP-N-acetylmuramoylalanine--D-glutamate ligase</fullName>
        <ecNumber evidence="1">6.3.2.9</ecNumber>
    </recommendedName>
    <alternativeName>
        <fullName evidence="1">D-glutamic acid-adding enzyme</fullName>
    </alternativeName>
    <alternativeName>
        <fullName evidence="1">UDP-N-acetylmuramoyl-L-alanyl-D-glutamate synthetase</fullName>
    </alternativeName>
</protein>